<reference key="1">
    <citation type="journal article" date="1997" name="DNA Res.">
        <title>Structural analysis of Arabidopsis thaliana chromosome 5. II. Sequence features of the regions of 1,044,062 bp covered by thirteen physically assigned P1 clones.</title>
        <authorList>
            <person name="Kotani H."/>
            <person name="Nakamura Y."/>
            <person name="Sato S."/>
            <person name="Kaneko T."/>
            <person name="Asamizu E."/>
            <person name="Miyajima N."/>
            <person name="Tabata S."/>
        </authorList>
    </citation>
    <scope>NUCLEOTIDE SEQUENCE [LARGE SCALE GENOMIC DNA]</scope>
    <source>
        <strain>cv. Columbia</strain>
    </source>
</reference>
<reference key="2">
    <citation type="journal article" date="2017" name="Plant J.">
        <title>Araport11: a complete reannotation of the Arabidopsis thaliana reference genome.</title>
        <authorList>
            <person name="Cheng C.Y."/>
            <person name="Krishnakumar V."/>
            <person name="Chan A.P."/>
            <person name="Thibaud-Nissen F."/>
            <person name="Schobel S."/>
            <person name="Town C.D."/>
        </authorList>
    </citation>
    <scope>GENOME REANNOTATION</scope>
    <source>
        <strain>cv. Columbia</strain>
    </source>
</reference>
<keyword id="KW-0067">ATP-binding</keyword>
<keyword id="KW-0378">Hydrolase</keyword>
<keyword id="KW-0460">Magnesium</keyword>
<keyword id="KW-0472">Membrane</keyword>
<keyword id="KW-0547">Nucleotide-binding</keyword>
<keyword id="KW-1185">Reference proteome</keyword>
<keyword id="KW-0812">Transmembrane</keyword>
<keyword id="KW-1133">Transmembrane helix</keyword>
<protein>
    <recommendedName>
        <fullName>AAA-ATPase At5g17740</fullName>
        <ecNumber evidence="1">3.6.1.-</ecNumber>
    </recommendedName>
</protein>
<organism evidence="6">
    <name type="scientific">Arabidopsis thaliana</name>
    <name type="common">Mouse-ear cress</name>
    <dbReference type="NCBI Taxonomy" id="3702"/>
    <lineage>
        <taxon>Eukaryota</taxon>
        <taxon>Viridiplantae</taxon>
        <taxon>Streptophyta</taxon>
        <taxon>Embryophyta</taxon>
        <taxon>Tracheophyta</taxon>
        <taxon>Spermatophyta</taxon>
        <taxon>Magnoliopsida</taxon>
        <taxon>eudicotyledons</taxon>
        <taxon>Gunneridae</taxon>
        <taxon>Pentapetalae</taxon>
        <taxon>rosids</taxon>
        <taxon>malvids</taxon>
        <taxon>Brassicales</taxon>
        <taxon>Brassicaceae</taxon>
        <taxon>Camelineae</taxon>
        <taxon>Arabidopsis</taxon>
    </lineage>
</organism>
<accession>Q9FN77</accession>
<evidence type="ECO:0000250" key="1">
    <source>
        <dbReference type="UniProtKB" id="Q9FLD5"/>
    </source>
</evidence>
<evidence type="ECO:0000255" key="2"/>
<evidence type="ECO:0000305" key="3"/>
<evidence type="ECO:0000312" key="4">
    <source>
        <dbReference type="EMBL" id="AED92462.1"/>
    </source>
</evidence>
<evidence type="ECO:0000312" key="5">
    <source>
        <dbReference type="EMBL" id="BAB09573.1"/>
    </source>
</evidence>
<evidence type="ECO:0000312" key="6">
    <source>
        <dbReference type="Proteomes" id="UP000006548"/>
    </source>
</evidence>
<feature type="chain" id="PRO_0000434718" description="AAA-ATPase At5g17740">
    <location>
        <begin position="1"/>
        <end position="533"/>
    </location>
</feature>
<feature type="transmembrane region" description="Helical" evidence="2">
    <location>
        <begin position="11"/>
        <end position="27"/>
    </location>
</feature>
<feature type="binding site" evidence="2">
    <location>
        <begin position="252"/>
        <end position="259"/>
    </location>
    <ligand>
        <name>ATP</name>
        <dbReference type="ChEBI" id="CHEBI:30616"/>
    </ligand>
</feature>
<proteinExistence type="inferred from homology"/>
<sequence>MVFSRDIPSPASMFSTYASMMGYVMIIKPMINTIIPRPVQNFVFSYLKSFAGSRSSTLTLTIDQMSSMYIPDELYAAAQAYLSTKISPNSVRLIMARDPAEKKVKLYLSDGEVVSDVYNGIKLKWRFLARNKNNTMVEEYGQSYQGNIQRESLELSFDKKHRDLVVNSYIPYVESKAKEVNNKRRILKMHCYSHMAQTWQSVNFKHPSTFDTMAMNDDLKRSMIEDLDRFVGRKDFYKRVGKAWKRGYLLYGPPGTGKSSLVAAMANYLKFDIYDLQLASVQGDAHLRSLLLATNNSSILLIEDIDCSVDLPTRLQPPTETSQPLGAVQVSKPLTLSGLLNCIDGLWSSCGNERIIIFTTNNKEKLDPALLRPGRMDMHIYMGHCSFQGFKTLASNYLGLSDENDDTHPLCPDIKHLIDGHVLTPAQVAEELMKDEDADAALEGLVKVLKRKRLEPKKCDDESKMKKLKEGEEAIADAELAVLTPAQVEDKEELVASEYANVMPEWLPRSRLVMVLPGFHRARGIRRGLGDEM</sequence>
<gene>
    <name evidence="4" type="ordered locus">At5g17740</name>
    <name evidence="5" type="ORF">MVA3.10</name>
</gene>
<name>AATPG_ARATH</name>
<comment type="catalytic activity">
    <reaction evidence="1">
        <text>ATP + H2O = ADP + phosphate + H(+)</text>
        <dbReference type="Rhea" id="RHEA:13065"/>
        <dbReference type="ChEBI" id="CHEBI:15377"/>
        <dbReference type="ChEBI" id="CHEBI:15378"/>
        <dbReference type="ChEBI" id="CHEBI:30616"/>
        <dbReference type="ChEBI" id="CHEBI:43474"/>
        <dbReference type="ChEBI" id="CHEBI:456216"/>
    </reaction>
</comment>
<comment type="cofactor">
    <cofactor evidence="1">
        <name>Mg(2+)</name>
        <dbReference type="ChEBI" id="CHEBI:18420"/>
    </cofactor>
</comment>
<comment type="subcellular location">
    <subcellularLocation>
        <location evidence="2">Membrane</location>
        <topology evidence="2">Single-pass membrane protein</topology>
    </subcellularLocation>
</comment>
<comment type="similarity">
    <text evidence="3">Belongs to the AAA ATPase family. BCS1 subfamily.</text>
</comment>
<dbReference type="EC" id="3.6.1.-" evidence="1"/>
<dbReference type="EMBL" id="AB006706">
    <property type="protein sequence ID" value="BAB09573.1"/>
    <property type="molecule type" value="Genomic_DNA"/>
</dbReference>
<dbReference type="EMBL" id="CP002688">
    <property type="protein sequence ID" value="AED92462.1"/>
    <property type="molecule type" value="Genomic_DNA"/>
</dbReference>
<dbReference type="RefSeq" id="NP_197276.1">
    <property type="nucleotide sequence ID" value="NM_121780.1"/>
</dbReference>
<dbReference type="SMR" id="Q9FN77"/>
<dbReference type="FunCoup" id="Q9FN77">
    <property type="interactions" value="1375"/>
</dbReference>
<dbReference type="STRING" id="3702.Q9FN77"/>
<dbReference type="PaxDb" id="3702-AT5G17740.1"/>
<dbReference type="ProteomicsDB" id="245126"/>
<dbReference type="EnsemblPlants" id="AT5G17740.1">
    <property type="protein sequence ID" value="AT5G17740.1"/>
    <property type="gene ID" value="AT5G17740"/>
</dbReference>
<dbReference type="GeneID" id="831642"/>
<dbReference type="Gramene" id="AT5G17740.1">
    <property type="protein sequence ID" value="AT5G17740.1"/>
    <property type="gene ID" value="AT5G17740"/>
</dbReference>
<dbReference type="KEGG" id="ath:AT5G17740"/>
<dbReference type="Araport" id="AT5G17740"/>
<dbReference type="TAIR" id="AT5G17740"/>
<dbReference type="eggNOG" id="KOG0743">
    <property type="taxonomic scope" value="Eukaryota"/>
</dbReference>
<dbReference type="HOGENOM" id="CLU_010189_0_2_1"/>
<dbReference type="InParanoid" id="Q9FN77"/>
<dbReference type="OMA" id="EELMLFI"/>
<dbReference type="PhylomeDB" id="Q9FN77"/>
<dbReference type="PRO" id="PR:Q9FN77"/>
<dbReference type="Proteomes" id="UP000006548">
    <property type="component" value="Chromosome 5"/>
</dbReference>
<dbReference type="ExpressionAtlas" id="Q9FN77">
    <property type="expression patterns" value="baseline"/>
</dbReference>
<dbReference type="GO" id="GO:0016020">
    <property type="term" value="C:membrane"/>
    <property type="evidence" value="ECO:0007669"/>
    <property type="project" value="UniProtKB-SubCell"/>
</dbReference>
<dbReference type="GO" id="GO:0005524">
    <property type="term" value="F:ATP binding"/>
    <property type="evidence" value="ECO:0007669"/>
    <property type="project" value="UniProtKB-KW"/>
</dbReference>
<dbReference type="GO" id="GO:0016887">
    <property type="term" value="F:ATP hydrolysis activity"/>
    <property type="evidence" value="ECO:0007669"/>
    <property type="project" value="InterPro"/>
</dbReference>
<dbReference type="GO" id="GO:0006950">
    <property type="term" value="P:response to stress"/>
    <property type="evidence" value="ECO:0007669"/>
    <property type="project" value="UniProtKB-ARBA"/>
</dbReference>
<dbReference type="CDD" id="cd19510">
    <property type="entry name" value="RecA-like_BCS1"/>
    <property type="match status" value="1"/>
</dbReference>
<dbReference type="Gene3D" id="6.10.280.40">
    <property type="match status" value="1"/>
</dbReference>
<dbReference type="Gene3D" id="3.40.50.300">
    <property type="entry name" value="P-loop containing nucleotide triphosphate hydrolases"/>
    <property type="match status" value="1"/>
</dbReference>
<dbReference type="InterPro" id="IPR003593">
    <property type="entry name" value="AAA+_ATPase"/>
</dbReference>
<dbReference type="InterPro" id="IPR025753">
    <property type="entry name" value="AAA_N_dom"/>
</dbReference>
<dbReference type="InterPro" id="IPR003959">
    <property type="entry name" value="ATPase_AAA_core"/>
</dbReference>
<dbReference type="InterPro" id="IPR003960">
    <property type="entry name" value="ATPase_AAA_CS"/>
</dbReference>
<dbReference type="InterPro" id="IPR050747">
    <property type="entry name" value="Mitochondrial_chaperone_BCS1"/>
</dbReference>
<dbReference type="InterPro" id="IPR027417">
    <property type="entry name" value="P-loop_NTPase"/>
</dbReference>
<dbReference type="PANTHER" id="PTHR23070">
    <property type="entry name" value="BCS1 AAA-TYPE ATPASE"/>
    <property type="match status" value="1"/>
</dbReference>
<dbReference type="Pfam" id="PF00004">
    <property type="entry name" value="AAA"/>
    <property type="match status" value="1"/>
</dbReference>
<dbReference type="Pfam" id="PF14363">
    <property type="entry name" value="AAA_assoc"/>
    <property type="match status" value="1"/>
</dbReference>
<dbReference type="SMART" id="SM00382">
    <property type="entry name" value="AAA"/>
    <property type="match status" value="1"/>
</dbReference>
<dbReference type="SUPFAM" id="SSF52540">
    <property type="entry name" value="P-loop containing nucleoside triphosphate hydrolases"/>
    <property type="match status" value="1"/>
</dbReference>
<dbReference type="PROSITE" id="PS00674">
    <property type="entry name" value="AAA"/>
    <property type="match status" value="1"/>
</dbReference>